<dbReference type="EC" id="7.1.1.-" evidence="1"/>
<dbReference type="EMBL" id="CP001132">
    <property type="protein sequence ID" value="ACH84458.1"/>
    <property type="molecule type" value="Genomic_DNA"/>
</dbReference>
<dbReference type="RefSeq" id="WP_009566652.1">
    <property type="nucleotide sequence ID" value="NC_011206.1"/>
</dbReference>
<dbReference type="SMR" id="B5EN69"/>
<dbReference type="KEGG" id="afe:Lferr_2255"/>
<dbReference type="eggNOG" id="COG0852">
    <property type="taxonomic scope" value="Bacteria"/>
</dbReference>
<dbReference type="HOGENOM" id="CLU_042628_2_1_6"/>
<dbReference type="GO" id="GO:0005886">
    <property type="term" value="C:plasma membrane"/>
    <property type="evidence" value="ECO:0007669"/>
    <property type="project" value="UniProtKB-SubCell"/>
</dbReference>
<dbReference type="GO" id="GO:0008137">
    <property type="term" value="F:NADH dehydrogenase (ubiquinone) activity"/>
    <property type="evidence" value="ECO:0007669"/>
    <property type="project" value="InterPro"/>
</dbReference>
<dbReference type="GO" id="GO:0050136">
    <property type="term" value="F:NADH:ubiquinone reductase (non-electrogenic) activity"/>
    <property type="evidence" value="ECO:0007669"/>
    <property type="project" value="UniProtKB-UniRule"/>
</dbReference>
<dbReference type="GO" id="GO:0048038">
    <property type="term" value="F:quinone binding"/>
    <property type="evidence" value="ECO:0007669"/>
    <property type="project" value="UniProtKB-KW"/>
</dbReference>
<dbReference type="Gene3D" id="3.30.460.80">
    <property type="entry name" value="NADH:ubiquinone oxidoreductase, 30kDa subunit"/>
    <property type="match status" value="1"/>
</dbReference>
<dbReference type="HAMAP" id="MF_01357">
    <property type="entry name" value="NDH1_NuoC"/>
    <property type="match status" value="1"/>
</dbReference>
<dbReference type="InterPro" id="IPR010218">
    <property type="entry name" value="NADH_DH_suC"/>
</dbReference>
<dbReference type="InterPro" id="IPR037232">
    <property type="entry name" value="NADH_quin_OxRdtase_su_C/D-like"/>
</dbReference>
<dbReference type="InterPro" id="IPR001268">
    <property type="entry name" value="NADH_UbQ_OxRdtase_30kDa_su"/>
</dbReference>
<dbReference type="InterPro" id="IPR020396">
    <property type="entry name" value="NADH_UbQ_OxRdtase_CS"/>
</dbReference>
<dbReference type="NCBIfam" id="TIGR01961">
    <property type="entry name" value="NuoC_fam"/>
    <property type="match status" value="1"/>
</dbReference>
<dbReference type="NCBIfam" id="NF004730">
    <property type="entry name" value="PRK06074.1-1"/>
    <property type="match status" value="1"/>
</dbReference>
<dbReference type="PANTHER" id="PTHR10884:SF14">
    <property type="entry name" value="NADH DEHYDROGENASE [UBIQUINONE] IRON-SULFUR PROTEIN 3, MITOCHONDRIAL"/>
    <property type="match status" value="1"/>
</dbReference>
<dbReference type="PANTHER" id="PTHR10884">
    <property type="entry name" value="NADH DEHYDROGENASE UBIQUINONE IRON-SULFUR PROTEIN 3"/>
    <property type="match status" value="1"/>
</dbReference>
<dbReference type="Pfam" id="PF00329">
    <property type="entry name" value="Complex1_30kDa"/>
    <property type="match status" value="1"/>
</dbReference>
<dbReference type="SUPFAM" id="SSF143243">
    <property type="entry name" value="Nqo5-like"/>
    <property type="match status" value="1"/>
</dbReference>
<dbReference type="PROSITE" id="PS00542">
    <property type="entry name" value="COMPLEX1_30K"/>
    <property type="match status" value="1"/>
</dbReference>
<gene>
    <name evidence="1" type="primary">nuoC</name>
    <name type="ordered locus">Lferr_2255</name>
</gene>
<name>NUOC_ACIF5</name>
<organism>
    <name type="scientific">Acidithiobacillus ferrooxidans (strain ATCC 53993 / BNL-5-31)</name>
    <name type="common">Leptospirillum ferrooxidans (ATCC 53993)</name>
    <dbReference type="NCBI Taxonomy" id="380394"/>
    <lineage>
        <taxon>Bacteria</taxon>
        <taxon>Pseudomonadati</taxon>
        <taxon>Pseudomonadota</taxon>
        <taxon>Acidithiobacillia</taxon>
        <taxon>Acidithiobacillales</taxon>
        <taxon>Acidithiobacillaceae</taxon>
        <taxon>Acidithiobacillus</taxon>
    </lineage>
</organism>
<accession>B5EN69</accession>
<evidence type="ECO:0000255" key="1">
    <source>
        <dbReference type="HAMAP-Rule" id="MF_01357"/>
    </source>
</evidence>
<protein>
    <recommendedName>
        <fullName evidence="1">NADH-quinone oxidoreductase subunit C</fullName>
        <ecNumber evidence="1">7.1.1.-</ecNumber>
    </recommendedName>
    <alternativeName>
        <fullName evidence="1">NADH dehydrogenase I subunit C</fullName>
    </alternativeName>
    <alternativeName>
        <fullName evidence="1">NDH-1 subunit C</fullName>
    </alternativeName>
</protein>
<proteinExistence type="inferred from homology"/>
<keyword id="KW-0997">Cell inner membrane</keyword>
<keyword id="KW-1003">Cell membrane</keyword>
<keyword id="KW-0472">Membrane</keyword>
<keyword id="KW-0520">NAD</keyword>
<keyword id="KW-0874">Quinone</keyword>
<keyword id="KW-1278">Translocase</keyword>
<keyword id="KW-0813">Transport</keyword>
<keyword id="KW-0830">Ubiquinone</keyword>
<sequence>MTDALENLRQHLSDELGATLRTAHLDRGELTVELSREGFPAACLLLRDDVACAFDLLVDVCGVDYSAYGEGLWEGPRFAVVYHLLSLKHRQRLRVRIFADDDLPIVPSVVEVWAAANWFEREAFDLYGILFDGHPDLRRILTDYGFVGHPFRKDFPLVGTVEMRYDADQGRVVYEPTRTEERVVVPRIIREAGEGRYNARNQ</sequence>
<reference key="1">
    <citation type="submission" date="2008-08" db="EMBL/GenBank/DDBJ databases">
        <title>Complete sequence of Acidithiobacillus ferrooxidans ATCC 53993.</title>
        <authorList>
            <person name="Lucas S."/>
            <person name="Copeland A."/>
            <person name="Lapidus A."/>
            <person name="Glavina del Rio T."/>
            <person name="Dalin E."/>
            <person name="Tice H."/>
            <person name="Bruce D."/>
            <person name="Goodwin L."/>
            <person name="Pitluck S."/>
            <person name="Sims D."/>
            <person name="Brettin T."/>
            <person name="Detter J.C."/>
            <person name="Han C."/>
            <person name="Kuske C.R."/>
            <person name="Larimer F."/>
            <person name="Land M."/>
            <person name="Hauser L."/>
            <person name="Kyrpides N."/>
            <person name="Lykidis A."/>
            <person name="Borole A.P."/>
        </authorList>
    </citation>
    <scope>NUCLEOTIDE SEQUENCE [LARGE SCALE GENOMIC DNA]</scope>
    <source>
        <strain>ATCC 53993 / BNL-5-31</strain>
    </source>
</reference>
<feature type="chain" id="PRO_0000358032" description="NADH-quinone oxidoreductase subunit C">
    <location>
        <begin position="1"/>
        <end position="202"/>
    </location>
</feature>
<comment type="function">
    <text evidence="1">NDH-1 shuttles electrons from NADH, via FMN and iron-sulfur (Fe-S) centers, to quinones in the respiratory chain. The immediate electron acceptor for the enzyme in this species is believed to be ubiquinone. Couples the redox reaction to proton translocation (for every two electrons transferred, four hydrogen ions are translocated across the cytoplasmic membrane), and thus conserves the redox energy in a proton gradient.</text>
</comment>
<comment type="catalytic activity">
    <reaction evidence="1">
        <text>a quinone + NADH + 5 H(+)(in) = a quinol + NAD(+) + 4 H(+)(out)</text>
        <dbReference type="Rhea" id="RHEA:57888"/>
        <dbReference type="ChEBI" id="CHEBI:15378"/>
        <dbReference type="ChEBI" id="CHEBI:24646"/>
        <dbReference type="ChEBI" id="CHEBI:57540"/>
        <dbReference type="ChEBI" id="CHEBI:57945"/>
        <dbReference type="ChEBI" id="CHEBI:132124"/>
    </reaction>
</comment>
<comment type="subunit">
    <text evidence="1">NDH-1 is composed of 14 different subunits. Subunits NuoB, C, D, E, F, and G constitute the peripheral sector of the complex.</text>
</comment>
<comment type="subcellular location">
    <subcellularLocation>
        <location evidence="1">Cell inner membrane</location>
        <topology evidence="1">Peripheral membrane protein</topology>
        <orientation evidence="1">Cytoplasmic side</orientation>
    </subcellularLocation>
</comment>
<comment type="similarity">
    <text evidence="1">Belongs to the complex I 30 kDa subunit family.</text>
</comment>